<keyword id="KW-0240">DNA-directed RNA polymerase</keyword>
<keyword id="KW-0548">Nucleotidyltransferase</keyword>
<keyword id="KW-0804">Transcription</keyword>
<keyword id="KW-0808">Transferase</keyword>
<gene>
    <name evidence="1" type="primary">rpoZ</name>
    <name type="ordered locus">Pput_5210</name>
</gene>
<protein>
    <recommendedName>
        <fullName evidence="1">DNA-directed RNA polymerase subunit omega</fullName>
        <shortName evidence="1">RNAP omega subunit</shortName>
        <ecNumber evidence="1">2.7.7.6</ecNumber>
    </recommendedName>
    <alternativeName>
        <fullName evidence="1">RNA polymerase omega subunit</fullName>
    </alternativeName>
    <alternativeName>
        <fullName evidence="1">Transcriptase subunit omega</fullName>
    </alternativeName>
</protein>
<feature type="chain" id="PRO_1000005982" description="DNA-directed RNA polymerase subunit omega">
    <location>
        <begin position="1"/>
        <end position="87"/>
    </location>
</feature>
<reference key="1">
    <citation type="submission" date="2007-05" db="EMBL/GenBank/DDBJ databases">
        <title>Complete sequence of Pseudomonas putida F1.</title>
        <authorList>
            <consortium name="US DOE Joint Genome Institute"/>
            <person name="Copeland A."/>
            <person name="Lucas S."/>
            <person name="Lapidus A."/>
            <person name="Barry K."/>
            <person name="Detter J.C."/>
            <person name="Glavina del Rio T."/>
            <person name="Hammon N."/>
            <person name="Israni S."/>
            <person name="Dalin E."/>
            <person name="Tice H."/>
            <person name="Pitluck S."/>
            <person name="Chain P."/>
            <person name="Malfatti S."/>
            <person name="Shin M."/>
            <person name="Vergez L."/>
            <person name="Schmutz J."/>
            <person name="Larimer F."/>
            <person name="Land M."/>
            <person name="Hauser L."/>
            <person name="Kyrpides N."/>
            <person name="Lykidis A."/>
            <person name="Parales R."/>
            <person name="Richardson P."/>
        </authorList>
    </citation>
    <scope>NUCLEOTIDE SEQUENCE [LARGE SCALE GENOMIC DNA]</scope>
    <source>
        <strain>ATCC 700007 / DSM 6899 / JCM 31910 / BCRC 17059 / LMG 24140 / F1</strain>
    </source>
</reference>
<proteinExistence type="inferred from homology"/>
<evidence type="ECO:0000255" key="1">
    <source>
        <dbReference type="HAMAP-Rule" id="MF_00366"/>
    </source>
</evidence>
<accession>A5WB18</accession>
<comment type="function">
    <text evidence="1">Promotes RNA polymerase assembly. Latches the N- and C-terminal regions of the beta' subunit thereby facilitating its interaction with the beta and alpha subunits.</text>
</comment>
<comment type="catalytic activity">
    <reaction evidence="1">
        <text>RNA(n) + a ribonucleoside 5'-triphosphate = RNA(n+1) + diphosphate</text>
        <dbReference type="Rhea" id="RHEA:21248"/>
        <dbReference type="Rhea" id="RHEA-COMP:14527"/>
        <dbReference type="Rhea" id="RHEA-COMP:17342"/>
        <dbReference type="ChEBI" id="CHEBI:33019"/>
        <dbReference type="ChEBI" id="CHEBI:61557"/>
        <dbReference type="ChEBI" id="CHEBI:140395"/>
        <dbReference type="EC" id="2.7.7.6"/>
    </reaction>
</comment>
<comment type="subunit">
    <text evidence="1">The RNAP catalytic core consists of 2 alpha, 1 beta, 1 beta' and 1 omega subunit. When a sigma factor is associated with the core the holoenzyme is formed, which can initiate transcription.</text>
</comment>
<comment type="similarity">
    <text evidence="1">Belongs to the RNA polymerase subunit omega family.</text>
</comment>
<organism>
    <name type="scientific">Pseudomonas putida (strain ATCC 700007 / DSM 6899 / JCM 31910 / BCRC 17059 / LMG 24140 / F1)</name>
    <dbReference type="NCBI Taxonomy" id="351746"/>
    <lineage>
        <taxon>Bacteria</taxon>
        <taxon>Pseudomonadati</taxon>
        <taxon>Pseudomonadota</taxon>
        <taxon>Gammaproteobacteria</taxon>
        <taxon>Pseudomonadales</taxon>
        <taxon>Pseudomonadaceae</taxon>
        <taxon>Pseudomonas</taxon>
    </lineage>
</organism>
<name>RPOZ_PSEP1</name>
<dbReference type="EC" id="2.7.7.6" evidence="1"/>
<dbReference type="EMBL" id="CP000712">
    <property type="protein sequence ID" value="ABQ81328.1"/>
    <property type="molecule type" value="Genomic_DNA"/>
</dbReference>
<dbReference type="SMR" id="A5WB18"/>
<dbReference type="KEGG" id="ppf:Pput_5210"/>
<dbReference type="eggNOG" id="COG1758">
    <property type="taxonomic scope" value="Bacteria"/>
</dbReference>
<dbReference type="HOGENOM" id="CLU_125406_5_2_6"/>
<dbReference type="GO" id="GO:0000428">
    <property type="term" value="C:DNA-directed RNA polymerase complex"/>
    <property type="evidence" value="ECO:0007669"/>
    <property type="project" value="UniProtKB-KW"/>
</dbReference>
<dbReference type="GO" id="GO:0003677">
    <property type="term" value="F:DNA binding"/>
    <property type="evidence" value="ECO:0007669"/>
    <property type="project" value="UniProtKB-UniRule"/>
</dbReference>
<dbReference type="GO" id="GO:0003899">
    <property type="term" value="F:DNA-directed RNA polymerase activity"/>
    <property type="evidence" value="ECO:0007669"/>
    <property type="project" value="UniProtKB-UniRule"/>
</dbReference>
<dbReference type="GO" id="GO:0006351">
    <property type="term" value="P:DNA-templated transcription"/>
    <property type="evidence" value="ECO:0007669"/>
    <property type="project" value="UniProtKB-UniRule"/>
</dbReference>
<dbReference type="Gene3D" id="3.90.940.10">
    <property type="match status" value="1"/>
</dbReference>
<dbReference type="HAMAP" id="MF_00366">
    <property type="entry name" value="RNApol_bact_RpoZ"/>
    <property type="match status" value="1"/>
</dbReference>
<dbReference type="InterPro" id="IPR003716">
    <property type="entry name" value="DNA-dir_RNA_pol_omega"/>
</dbReference>
<dbReference type="InterPro" id="IPR006110">
    <property type="entry name" value="Pol_omega/Rpo6/RPB6"/>
</dbReference>
<dbReference type="InterPro" id="IPR036161">
    <property type="entry name" value="RPB6/omega-like_sf"/>
</dbReference>
<dbReference type="NCBIfam" id="TIGR00690">
    <property type="entry name" value="rpoZ"/>
    <property type="match status" value="1"/>
</dbReference>
<dbReference type="PANTHER" id="PTHR34476">
    <property type="entry name" value="DNA-DIRECTED RNA POLYMERASE SUBUNIT OMEGA"/>
    <property type="match status" value="1"/>
</dbReference>
<dbReference type="PANTHER" id="PTHR34476:SF1">
    <property type="entry name" value="DNA-DIRECTED RNA POLYMERASE SUBUNIT OMEGA"/>
    <property type="match status" value="1"/>
</dbReference>
<dbReference type="Pfam" id="PF01192">
    <property type="entry name" value="RNA_pol_Rpb6"/>
    <property type="match status" value="1"/>
</dbReference>
<dbReference type="SMART" id="SM01409">
    <property type="entry name" value="RNA_pol_Rpb6"/>
    <property type="match status" value="1"/>
</dbReference>
<dbReference type="SUPFAM" id="SSF63562">
    <property type="entry name" value="RPB6/omega subunit-like"/>
    <property type="match status" value="1"/>
</dbReference>
<sequence>MARVTVEDCLEHVDNRFELVMLSTKRARQLATGGKEPRVAWENDKPTVVALREIAEGIVTNEFIAAEEIVTEDPVFAAFEDENNEAV</sequence>